<reference key="1">
    <citation type="journal article" date="2001" name="Biochem. Biophys. Res. Commun.">
        <title>A mammalian radial spokehead-like gene, RSHL1, at the myotonic dystrophy-1 locus.</title>
        <authorList>
            <person name="Eriksson M."/>
            <person name="Ansved T."/>
            <person name="Anvret M."/>
            <person name="Carey N."/>
        </authorList>
    </citation>
    <scope>NUCLEOTIDE SEQUENCE [MRNA]</scope>
    <scope>TISSUE SPECIFICITY</scope>
    <source>
        <strain>C57BL/10</strain>
        <tissue>Testis</tissue>
    </source>
</reference>
<reference key="2">
    <citation type="journal article" date="2009" name="PLoS Biol.">
        <title>Lineage-specific biology revealed by a finished genome assembly of the mouse.</title>
        <authorList>
            <person name="Church D.M."/>
            <person name="Goodstadt L."/>
            <person name="Hillier L.W."/>
            <person name="Zody M.C."/>
            <person name="Goldstein S."/>
            <person name="She X."/>
            <person name="Bult C.J."/>
            <person name="Agarwala R."/>
            <person name="Cherry J.L."/>
            <person name="DiCuccio M."/>
            <person name="Hlavina W."/>
            <person name="Kapustin Y."/>
            <person name="Meric P."/>
            <person name="Maglott D."/>
            <person name="Birtle Z."/>
            <person name="Marques A.C."/>
            <person name="Graves T."/>
            <person name="Zhou S."/>
            <person name="Teague B."/>
            <person name="Potamousis K."/>
            <person name="Churas C."/>
            <person name="Place M."/>
            <person name="Herschleb J."/>
            <person name="Runnheim R."/>
            <person name="Forrest D."/>
            <person name="Amos-Landgraf J."/>
            <person name="Schwartz D.C."/>
            <person name="Cheng Z."/>
            <person name="Lindblad-Toh K."/>
            <person name="Eichler E.E."/>
            <person name="Ponting C.P."/>
        </authorList>
    </citation>
    <scope>NUCLEOTIDE SEQUENCE [LARGE SCALE GENOMIC DNA] (ISOFORM 2)</scope>
    <source>
        <strain>C57BL/6J</strain>
    </source>
</reference>
<reference key="3">
    <citation type="journal article" date="2005" name="Science">
        <title>The transcriptional landscape of the mammalian genome.</title>
        <authorList>
            <person name="Carninci P."/>
            <person name="Kasukawa T."/>
            <person name="Katayama S."/>
            <person name="Gough J."/>
            <person name="Frith M.C."/>
            <person name="Maeda N."/>
            <person name="Oyama R."/>
            <person name="Ravasi T."/>
            <person name="Lenhard B."/>
            <person name="Wells C."/>
            <person name="Kodzius R."/>
            <person name="Shimokawa K."/>
            <person name="Bajic V.B."/>
            <person name="Brenner S.E."/>
            <person name="Batalov S."/>
            <person name="Forrest A.R."/>
            <person name="Zavolan M."/>
            <person name="Davis M.J."/>
            <person name="Wilming L.G."/>
            <person name="Aidinis V."/>
            <person name="Allen J.E."/>
            <person name="Ambesi-Impiombato A."/>
            <person name="Apweiler R."/>
            <person name="Aturaliya R.N."/>
            <person name="Bailey T.L."/>
            <person name="Bansal M."/>
            <person name="Baxter L."/>
            <person name="Beisel K.W."/>
            <person name="Bersano T."/>
            <person name="Bono H."/>
            <person name="Chalk A.M."/>
            <person name="Chiu K.P."/>
            <person name="Choudhary V."/>
            <person name="Christoffels A."/>
            <person name="Clutterbuck D.R."/>
            <person name="Crowe M.L."/>
            <person name="Dalla E."/>
            <person name="Dalrymple B.P."/>
            <person name="de Bono B."/>
            <person name="Della Gatta G."/>
            <person name="di Bernardo D."/>
            <person name="Down T."/>
            <person name="Engstrom P."/>
            <person name="Fagiolini M."/>
            <person name="Faulkner G."/>
            <person name="Fletcher C.F."/>
            <person name="Fukushima T."/>
            <person name="Furuno M."/>
            <person name="Futaki S."/>
            <person name="Gariboldi M."/>
            <person name="Georgii-Hemming P."/>
            <person name="Gingeras T.R."/>
            <person name="Gojobori T."/>
            <person name="Green R.E."/>
            <person name="Gustincich S."/>
            <person name="Harbers M."/>
            <person name="Hayashi Y."/>
            <person name="Hensch T.K."/>
            <person name="Hirokawa N."/>
            <person name="Hill D."/>
            <person name="Huminiecki L."/>
            <person name="Iacono M."/>
            <person name="Ikeo K."/>
            <person name="Iwama A."/>
            <person name="Ishikawa T."/>
            <person name="Jakt M."/>
            <person name="Kanapin A."/>
            <person name="Katoh M."/>
            <person name="Kawasawa Y."/>
            <person name="Kelso J."/>
            <person name="Kitamura H."/>
            <person name="Kitano H."/>
            <person name="Kollias G."/>
            <person name="Krishnan S.P."/>
            <person name="Kruger A."/>
            <person name="Kummerfeld S.K."/>
            <person name="Kurochkin I.V."/>
            <person name="Lareau L.F."/>
            <person name="Lazarevic D."/>
            <person name="Lipovich L."/>
            <person name="Liu J."/>
            <person name="Liuni S."/>
            <person name="McWilliam S."/>
            <person name="Madan Babu M."/>
            <person name="Madera M."/>
            <person name="Marchionni L."/>
            <person name="Matsuda H."/>
            <person name="Matsuzawa S."/>
            <person name="Miki H."/>
            <person name="Mignone F."/>
            <person name="Miyake S."/>
            <person name="Morris K."/>
            <person name="Mottagui-Tabar S."/>
            <person name="Mulder N."/>
            <person name="Nakano N."/>
            <person name="Nakauchi H."/>
            <person name="Ng P."/>
            <person name="Nilsson R."/>
            <person name="Nishiguchi S."/>
            <person name="Nishikawa S."/>
            <person name="Nori F."/>
            <person name="Ohara O."/>
            <person name="Okazaki Y."/>
            <person name="Orlando V."/>
            <person name="Pang K.C."/>
            <person name="Pavan W.J."/>
            <person name="Pavesi G."/>
            <person name="Pesole G."/>
            <person name="Petrovsky N."/>
            <person name="Piazza S."/>
            <person name="Reed J."/>
            <person name="Reid J.F."/>
            <person name="Ring B.Z."/>
            <person name="Ringwald M."/>
            <person name="Rost B."/>
            <person name="Ruan Y."/>
            <person name="Salzberg S.L."/>
            <person name="Sandelin A."/>
            <person name="Schneider C."/>
            <person name="Schoenbach C."/>
            <person name="Sekiguchi K."/>
            <person name="Semple C.A."/>
            <person name="Seno S."/>
            <person name="Sessa L."/>
            <person name="Sheng Y."/>
            <person name="Shibata Y."/>
            <person name="Shimada H."/>
            <person name="Shimada K."/>
            <person name="Silva D."/>
            <person name="Sinclair B."/>
            <person name="Sperling S."/>
            <person name="Stupka E."/>
            <person name="Sugiura K."/>
            <person name="Sultana R."/>
            <person name="Takenaka Y."/>
            <person name="Taki K."/>
            <person name="Tammoja K."/>
            <person name="Tan S.L."/>
            <person name="Tang S."/>
            <person name="Taylor M.S."/>
            <person name="Tegner J."/>
            <person name="Teichmann S.A."/>
            <person name="Ueda H.R."/>
            <person name="van Nimwegen E."/>
            <person name="Verardo R."/>
            <person name="Wei C.L."/>
            <person name="Yagi K."/>
            <person name="Yamanishi H."/>
            <person name="Zabarovsky E."/>
            <person name="Zhu S."/>
            <person name="Zimmer A."/>
            <person name="Hide W."/>
            <person name="Bult C."/>
            <person name="Grimmond S.M."/>
            <person name="Teasdale R.D."/>
            <person name="Liu E.T."/>
            <person name="Brusic V."/>
            <person name="Quackenbush J."/>
            <person name="Wahlestedt C."/>
            <person name="Mattick J.S."/>
            <person name="Hume D.A."/>
            <person name="Kai C."/>
            <person name="Sasaki D."/>
            <person name="Tomaru Y."/>
            <person name="Fukuda S."/>
            <person name="Kanamori-Katayama M."/>
            <person name="Suzuki M."/>
            <person name="Aoki J."/>
            <person name="Arakawa T."/>
            <person name="Iida J."/>
            <person name="Imamura K."/>
            <person name="Itoh M."/>
            <person name="Kato T."/>
            <person name="Kawaji H."/>
            <person name="Kawagashira N."/>
            <person name="Kawashima T."/>
            <person name="Kojima M."/>
            <person name="Kondo S."/>
            <person name="Konno H."/>
            <person name="Nakano K."/>
            <person name="Ninomiya N."/>
            <person name="Nishio T."/>
            <person name="Okada M."/>
            <person name="Plessy C."/>
            <person name="Shibata K."/>
            <person name="Shiraki T."/>
            <person name="Suzuki S."/>
            <person name="Tagami M."/>
            <person name="Waki K."/>
            <person name="Watahiki A."/>
            <person name="Okamura-Oho Y."/>
            <person name="Suzuki H."/>
            <person name="Kawai J."/>
            <person name="Hayashizaki Y."/>
        </authorList>
    </citation>
    <scope>NUCLEOTIDE SEQUENCE [LARGE SCALE MRNA]</scope>
    <source>
        <strain>C57BL/6J</strain>
        <tissue>Testis</tissue>
    </source>
</reference>
<reference key="4">
    <citation type="journal article" date="2010" name="Cell">
        <title>A tissue-specific atlas of mouse protein phosphorylation and expression.</title>
        <authorList>
            <person name="Huttlin E.L."/>
            <person name="Jedrychowski M.P."/>
            <person name="Elias J.E."/>
            <person name="Goswami T."/>
            <person name="Rad R."/>
            <person name="Beausoleil S.A."/>
            <person name="Villen J."/>
            <person name="Haas W."/>
            <person name="Sowa M.E."/>
            <person name="Gygi S.P."/>
        </authorList>
    </citation>
    <scope>IDENTIFICATION BY MASS SPECTROMETRY [LARGE SCALE ANALYSIS]</scope>
    <source>
        <tissue>Testis</tissue>
    </source>
</reference>
<reference key="5">
    <citation type="journal article" date="2018" name="J. Cell Sci.">
        <title>RSPH6A is required for sperm flagellum formation and male fertility in mice.</title>
        <authorList>
            <person name="Abbasi F."/>
            <person name="Miyata H."/>
            <person name="Shimada K."/>
            <person name="Morohoshi A."/>
            <person name="Nozawa K."/>
            <person name="Matsumura T."/>
            <person name="Xu Z."/>
            <person name="Pratiwi P."/>
            <person name="Ikawa M."/>
        </authorList>
    </citation>
    <scope>FUNCTION</scope>
    <scope>TISSUE SPECIFICITY</scope>
    <scope>SUBCELLULAR LOCATION</scope>
    <scope>DISRUPTION PHENOTYPE</scope>
    <scope>INTERACTION WITH RSPH1; RSPH4A; RSPH9 AND RSPH10B</scope>
    <scope>DEVELOPMENTAL STAGE</scope>
    <scope>ALTERNATIVE SPLICING</scope>
</reference>
<reference key="6">
    <citation type="journal article" date="2019" name="Biol. Reprod.">
        <title>Sperm capacitation is associated with phosphorylation of the testis-specific radial spoke protein Rsph6.</title>
        <authorList>
            <person name="Paudel B."/>
            <person name="Gervasi M.G."/>
            <person name="Porambo J."/>
            <person name="Caraballo D.A."/>
            <person name="Tourzani D.A."/>
            <person name="Mager J."/>
            <person name="Platt M.D."/>
            <person name="Salicioni A.M."/>
            <person name="Visconti P.E."/>
        </authorList>
    </citation>
    <scope>FUNCTION</scope>
    <scope>SUBCELLULAR LOCATION</scope>
    <scope>TISSUE SPECIFICITY</scope>
    <scope>PHOSPHORYLATION</scope>
    <scope>DEVELOPMENTAL STAGE</scope>
</reference>
<reference key="7">
    <citation type="journal article" date="2021" name="Proc. Natl. Acad. Sci. U.S.A.">
        <title>Distinct architecture and composition of mouse axonemal radial spoke head revealed by cryo-EM.</title>
        <authorList>
            <person name="Zheng W."/>
            <person name="Li F."/>
            <person name="Ding Z."/>
            <person name="Liu H."/>
            <person name="Zhu L."/>
            <person name="Xu C."/>
            <person name="Li J."/>
            <person name="Gao Q."/>
            <person name="Wang Y."/>
            <person name="Fu Z."/>
            <person name="Peng C."/>
            <person name="Yan X."/>
            <person name="Zhu X."/>
            <person name="Cong Y."/>
        </authorList>
    </citation>
    <scope>IDENTIFICATION IN RADIAL SPOKE COMPLEX 1 AND RADIAL SPOKE COMPLEX 2</scope>
    <scope>INTERACTION WITH RSPH1; RSPH3B AND RSPH9</scope>
    <scope>SUBCELLULAR LOCATION</scope>
</reference>
<reference key="8">
    <citation type="journal article" date="2022" name="Cell Rep.">
        <title>Differential requirements of IQUB for the assembly of radial spoke 1 and the motility of mouse cilia and flagella.</title>
        <authorList>
            <person name="Zhang X."/>
            <person name="Xiao Z."/>
            <person name="Zhang J."/>
            <person name="Xu C."/>
            <person name="Liu S."/>
            <person name="Cheng L."/>
            <person name="Zhou S."/>
            <person name="Zhao S."/>
            <person name="Zhang Y."/>
            <person name="Wu J."/>
            <person name="Wang Y."/>
            <person name="Liu M."/>
        </authorList>
    </citation>
    <scope>FUNCTION</scope>
    <scope>IDENTIFICATION IN RADIAL SPOKE COMPLEX 1</scope>
    <scope>IDENTIFICATION BY MASS SPECTROMETRY</scope>
</reference>
<evidence type="ECO:0000256" key="1">
    <source>
        <dbReference type="SAM" id="MobiDB-lite"/>
    </source>
</evidence>
<evidence type="ECO:0000269" key="2">
    <source>
    </source>
</evidence>
<evidence type="ECO:0000269" key="3">
    <source>
    </source>
</evidence>
<evidence type="ECO:0000269" key="4">
    <source>
    </source>
</evidence>
<evidence type="ECO:0000269" key="5">
    <source>
    </source>
</evidence>
<evidence type="ECO:0000269" key="6">
    <source>
    </source>
</evidence>
<evidence type="ECO:0000305" key="7"/>
<evidence type="ECO:0000312" key="8">
    <source>
        <dbReference type="MGI" id="MGI:1927643"/>
    </source>
</evidence>
<keyword id="KW-0025">Alternative splicing</keyword>
<keyword id="KW-0966">Cell projection</keyword>
<keyword id="KW-0969">Cilium</keyword>
<keyword id="KW-0963">Cytoplasm</keyword>
<keyword id="KW-0206">Cytoskeleton</keyword>
<keyword id="KW-0282">Flagellum</keyword>
<keyword id="KW-1185">Reference proteome</keyword>
<organism>
    <name type="scientific">Mus musculus</name>
    <name type="common">Mouse</name>
    <dbReference type="NCBI Taxonomy" id="10090"/>
    <lineage>
        <taxon>Eukaryota</taxon>
        <taxon>Metazoa</taxon>
        <taxon>Chordata</taxon>
        <taxon>Craniata</taxon>
        <taxon>Vertebrata</taxon>
        <taxon>Euteleostomi</taxon>
        <taxon>Mammalia</taxon>
        <taxon>Eutheria</taxon>
        <taxon>Euarchontoglires</taxon>
        <taxon>Glires</taxon>
        <taxon>Rodentia</taxon>
        <taxon>Myomorpha</taxon>
        <taxon>Muroidea</taxon>
        <taxon>Muridae</taxon>
        <taxon>Murinae</taxon>
        <taxon>Mus</taxon>
        <taxon>Mus</taxon>
    </lineage>
</organism>
<accession>Q8CDR2</accession>
<accession>Q99MM8</accession>
<accession>Q99MM9</accession>
<dbReference type="EMBL" id="AF329192">
    <property type="protein sequence ID" value="AAK19323.1"/>
    <property type="molecule type" value="mRNA"/>
</dbReference>
<dbReference type="EMBL" id="AF329191">
    <property type="protein sequence ID" value="AAK19322.1"/>
    <property type="molecule type" value="mRNA"/>
</dbReference>
<dbReference type="EMBL" id="AC170864">
    <property type="status" value="NOT_ANNOTATED_CDS"/>
    <property type="molecule type" value="Genomic_DNA"/>
</dbReference>
<dbReference type="EMBL" id="AK029699">
    <property type="protein sequence ID" value="BAC26571.1"/>
    <property type="molecule type" value="mRNA"/>
</dbReference>
<dbReference type="CCDS" id="CCDS20887.1">
    <molecule id="Q8CDR2-1"/>
</dbReference>
<dbReference type="CCDS" id="CCDS52052.1">
    <molecule id="Q8CDR2-2"/>
</dbReference>
<dbReference type="RefSeq" id="NP_001153143.1">
    <molecule id="Q8CDR2-2"/>
    <property type="nucleotide sequence ID" value="NM_001159671.2"/>
</dbReference>
<dbReference type="RefSeq" id="NP_112545.2">
    <molecule id="Q8CDR2-1"/>
    <property type="nucleotide sequence ID" value="NM_031255.3"/>
</dbReference>
<dbReference type="SMR" id="Q8CDR2"/>
<dbReference type="ComplexPortal" id="CPX-8162">
    <property type="entry name" value="Radial spoke complex, flagellar variant"/>
</dbReference>
<dbReference type="CORUM" id="Q8CDR2"/>
<dbReference type="FunCoup" id="Q8CDR2">
    <property type="interactions" value="83"/>
</dbReference>
<dbReference type="STRING" id="10090.ENSMUSP00000046526"/>
<dbReference type="PhosphoSitePlus" id="Q8CDR2"/>
<dbReference type="SwissPalm" id="Q8CDR2"/>
<dbReference type="PaxDb" id="10090-ENSMUSP00000046526"/>
<dbReference type="ProteomicsDB" id="260995">
    <molecule id="Q8CDR2-1"/>
</dbReference>
<dbReference type="ProteomicsDB" id="329144"/>
<dbReference type="Antibodypedia" id="49254">
    <property type="antibodies" value="33 antibodies from 11 providers"/>
</dbReference>
<dbReference type="DNASU" id="83434"/>
<dbReference type="Ensembl" id="ENSMUST00000035521.11">
    <molecule id="Q8CDR2-1"/>
    <property type="protein sequence ID" value="ENSMUSP00000046526.5"/>
    <property type="gene ID" value="ENSMUSG00000040866.14"/>
</dbReference>
<dbReference type="Ensembl" id="ENSMUST00000076887.6">
    <molecule id="Q8CDR2-2"/>
    <property type="protein sequence ID" value="ENSMUSP00000076153.6"/>
    <property type="gene ID" value="ENSMUSG00000040866.14"/>
</dbReference>
<dbReference type="GeneID" id="83434"/>
<dbReference type="KEGG" id="mmu:83434"/>
<dbReference type="UCSC" id="uc009fkj.2">
    <molecule id="Q8CDR2-1"/>
    <property type="organism name" value="mouse"/>
</dbReference>
<dbReference type="UCSC" id="uc012faw.1">
    <property type="organism name" value="mouse"/>
</dbReference>
<dbReference type="AGR" id="MGI:1927643"/>
<dbReference type="CTD" id="81492"/>
<dbReference type="MGI" id="MGI:1927643">
    <property type="gene designation" value="Rsph6a"/>
</dbReference>
<dbReference type="VEuPathDB" id="HostDB:ENSMUSG00000040866"/>
<dbReference type="eggNOG" id="ENOG502QSU4">
    <property type="taxonomic scope" value="Eukaryota"/>
</dbReference>
<dbReference type="GeneTree" id="ENSGT00500000044869"/>
<dbReference type="HOGENOM" id="CLU_021526_2_1_1"/>
<dbReference type="InParanoid" id="Q8CDR2"/>
<dbReference type="OMA" id="CVYFGNG"/>
<dbReference type="OrthoDB" id="272202at2759"/>
<dbReference type="PhylomeDB" id="Q8CDR2"/>
<dbReference type="TreeFam" id="TF324531"/>
<dbReference type="BioGRID-ORCS" id="83434">
    <property type="hits" value="1 hit in 76 CRISPR screens"/>
</dbReference>
<dbReference type="PRO" id="PR:Q8CDR2"/>
<dbReference type="Proteomes" id="UP000000589">
    <property type="component" value="Chromosome 7"/>
</dbReference>
<dbReference type="RNAct" id="Q8CDR2">
    <property type="molecule type" value="protein"/>
</dbReference>
<dbReference type="Bgee" id="ENSMUSG00000040866">
    <property type="expression patterns" value="Expressed in seminiferous tubule of testis and 9 other cell types or tissues"/>
</dbReference>
<dbReference type="ExpressionAtlas" id="Q8CDR2">
    <property type="expression patterns" value="baseline and differential"/>
</dbReference>
<dbReference type="GO" id="GO:0005930">
    <property type="term" value="C:axoneme"/>
    <property type="evidence" value="ECO:0000314"/>
    <property type="project" value="UniProtKB"/>
</dbReference>
<dbReference type="GO" id="GO:0001534">
    <property type="term" value="C:radial spoke"/>
    <property type="evidence" value="ECO:0000314"/>
    <property type="project" value="UniProtKB"/>
</dbReference>
<dbReference type="GO" id="GO:0001535">
    <property type="term" value="C:radial spoke head"/>
    <property type="evidence" value="ECO:0000314"/>
    <property type="project" value="UniProtKB"/>
</dbReference>
<dbReference type="GO" id="GO:0036126">
    <property type="term" value="C:sperm flagellum"/>
    <property type="evidence" value="ECO:0000314"/>
    <property type="project" value="UniProtKB"/>
</dbReference>
<dbReference type="GO" id="GO:0030317">
    <property type="term" value="P:flagellated sperm motility"/>
    <property type="evidence" value="ECO:0000305"/>
    <property type="project" value="UniProtKB"/>
</dbReference>
<dbReference type="GO" id="GO:1905199">
    <property type="term" value="P:manchette disassembly"/>
    <property type="evidence" value="ECO:0000315"/>
    <property type="project" value="UniProtKB"/>
</dbReference>
<dbReference type="GO" id="GO:0007618">
    <property type="term" value="P:mating"/>
    <property type="evidence" value="ECO:0000305"/>
    <property type="project" value="UniProtKB"/>
</dbReference>
<dbReference type="GO" id="GO:0120316">
    <property type="term" value="P:sperm flagellum assembly"/>
    <property type="evidence" value="ECO:0000315"/>
    <property type="project" value="UniProtKB"/>
</dbReference>
<dbReference type="CDD" id="cd22963">
    <property type="entry name" value="DD_CrRSP4-like"/>
    <property type="match status" value="1"/>
</dbReference>
<dbReference type="InterPro" id="IPR006802">
    <property type="entry name" value="Radial_spoke"/>
</dbReference>
<dbReference type="PANTHER" id="PTHR13159:SF1">
    <property type="entry name" value="RADIAL SPOKE HEAD PROTEIN 6 HOMOLOG A"/>
    <property type="match status" value="1"/>
</dbReference>
<dbReference type="PANTHER" id="PTHR13159">
    <property type="entry name" value="RADIAL SPOKEHEAD-RELATED"/>
    <property type="match status" value="1"/>
</dbReference>
<dbReference type="Pfam" id="PF04712">
    <property type="entry name" value="Radial_spoke"/>
    <property type="match status" value="1"/>
</dbReference>
<proteinExistence type="evidence at protein level"/>
<sequence length="708" mass="80202">MGEPPPNPDPSQTRRASQGSERARSQEYSQPLLTIPEDGLNRPPPQRGSRSSQGSQDLQGTGLPHWPQRSSLVPDVQGDEGTEYHQSMPLGYTPGFPMEFSQQGYLDDSRMMEQFPQGQDLLEQLESTYQGSASGILGQLNLYPREDEIFSQDTQHGPYLRDDPSLHLRPSDLGFMPIVGEVPDPEPRELAIQNAKAYLLRTSMSCNLSLYEHLVNLLTKILNQRPEDPLSILESLNRTMQWEWFHPKLDTLRDDPEMQPTYEMAEKQKALFIRGGGEGEQEMEEEVTDSPVPNIMETAFYFEQAGVGLSSDESFRIFLALKQLVEQQPIHMCRFWGKILGLSRSYLVAEVEFREGEEEGEEEEVEEMMEGGEVLETHGEEEGEEDEEKVVDSVPKPQWKPPPIIPKEESRSGTNKYLYFVCNEPGRPWTRLPHVTPAQIVCARKIKKFFTGFLDTPVISYPPFPGNEANYLRAQIARISAATHISPLGFYQFGEEEGDEEEEGGAGRDSFEENPDFEGIPVLELVDSMANWVHHTQHILPQGRCTWVNPLQKTEEEEELGEEEEKADEAMEEVEQEVGPPLLTPLSEDAEIMHLSPWTTRLSCSLSPQYSVAIVRSNLWPGAYAYATGKKFENIYIGWGHKYSPENFNPMLPALIQQEYPSGPEITEMSDPTVEEEQALKAAQEQALAAAEEEEEDEEEEEDEDLED</sequence>
<name>RSH6A_MOUSE</name>
<comment type="function">
    <text evidence="3 4 6">Functions as part of radial spoke complexes in the axoneme of sperm flagella that play an important part in motility (PubMed:36417862). The triple radial spokes (RS1, RS2 and RS3) are required to modulate beating of the sperm flagellum (PubMed:30185526, PubMed:30239614, PubMed:36417862).</text>
</comment>
<comment type="subunit">
    <text evidence="3 5 6">Component of the axonemal radial spoke 1 (RS1) and 2 (RS2) complexes, at least composed of spoke head proteins RSPH1, RSPH3, RSPH9 and the cilia-specific component RSPH4A or sperm-specific component RSPH6A, spoke stalk proteins RSPH14, DNAJB13, DYDC1, ROPN1L and NME5, and the RS1 complex-specific anchor protein IQUB (PubMed:34871179, PubMed:36417862). Interacts with RSPH1 (PubMed:30185526, PubMed:34871179). Interacts with RSPH3B (PubMed:34871179). Interacts with RSPH4A (PubMed:30185526). Interacts with RSPH9 (PubMed:30185526, PubMed:34871179). Interacts with RSPH10B (PubMed:30185526).</text>
</comment>
<comment type="subcellular location">
    <subcellularLocation>
        <location evidence="3 4 5">Cytoplasm</location>
        <location evidence="3 4 5">Cytoskeleton</location>
        <location evidence="3 4 5">Flagellum axoneme</location>
    </subcellularLocation>
</comment>
<comment type="alternative products">
    <event type="alternative splicing"/>
    <isoform>
        <id>Q8CDR2-1</id>
        <name>1</name>
        <sequence type="displayed"/>
    </isoform>
    <isoform>
        <id>Q8CDR2-2</id>
        <name>2</name>
        <sequence type="described" ref="VSP_060558"/>
    </isoform>
</comment>
<comment type="tissue specificity">
    <text evidence="2 3 4 5">Expressed in sperm and testis (at protein level).</text>
</comment>
<comment type="developmental stage">
    <text evidence="3 4">First detected during the haploid phase of spermatogenesis when secondary spermatocytes begin to appear at about postnatal day 18 (PubMed:30185526). Expression is maintained in mature sperm (PubMed:30239614).</text>
</comment>
<comment type="PTM">
    <text evidence="4">Phosphorylated by PKA. Phosphorylation increases in capacitated sperm.</text>
</comment>
<comment type="disruption phenotype">
    <text evidence="3">Male mutant mice are infertile. Mutant spermatozoa exhibit shorter tails, misshapen heads and immotility. Manchette removal is impaired.</text>
</comment>
<comment type="similarity">
    <text evidence="7">Belongs to the flagellar radial spoke RSP4/6 family.</text>
</comment>
<protein>
    <recommendedName>
        <fullName evidence="7">Radial spoke head protein 6 homolog A</fullName>
    </recommendedName>
    <alternativeName>
        <fullName>Radial spoke head-like protein 1</fullName>
    </alternativeName>
</protein>
<gene>
    <name evidence="8" type="primary">Rsph6a</name>
    <name type="synonym">Rshl1</name>
</gene>
<feature type="chain" id="PRO_0000312761" description="Radial spoke head protein 6 homolog A">
    <location>
        <begin position="1"/>
        <end position="708"/>
    </location>
</feature>
<feature type="region of interest" description="Disordered" evidence="1">
    <location>
        <begin position="1"/>
        <end position="94"/>
    </location>
</feature>
<feature type="region of interest" description="Disordered" evidence="1">
    <location>
        <begin position="376"/>
        <end position="407"/>
    </location>
</feature>
<feature type="region of interest" description="Disordered" evidence="1">
    <location>
        <begin position="495"/>
        <end position="514"/>
    </location>
</feature>
<feature type="region of interest" description="Disordered" evidence="1">
    <location>
        <begin position="663"/>
        <end position="708"/>
    </location>
</feature>
<feature type="compositionally biased region" description="Polar residues" evidence="1">
    <location>
        <begin position="10"/>
        <end position="32"/>
    </location>
</feature>
<feature type="compositionally biased region" description="Low complexity" evidence="1">
    <location>
        <begin position="47"/>
        <end position="56"/>
    </location>
</feature>
<feature type="compositionally biased region" description="Acidic residues" evidence="1">
    <location>
        <begin position="495"/>
        <end position="504"/>
    </location>
</feature>
<feature type="compositionally biased region" description="Low complexity" evidence="1">
    <location>
        <begin position="680"/>
        <end position="690"/>
    </location>
</feature>
<feature type="compositionally biased region" description="Acidic residues" evidence="1">
    <location>
        <begin position="691"/>
        <end position="708"/>
    </location>
</feature>
<feature type="splice variant" id="VSP_060558" description="In isoform 2.">
    <original>VTDSPVPNIMETAFYFEQAGVGLSSDESFRIFLALKQLVEQQPIHMCRFWGKILGLSRSYLVAEVEFREGEEEGEEEEVEEMMEGGEVLETHGEEEGEEDEEKVVDSVPKPQWKPPPIIPKEESRSGTNKYLYFVCNEPGRPWTRLPHVTPAQIVCARKIKKFFTGFLDTPVISYPPFPGNEANYLRAQIARISAATHISPLGFYQFGEEEGDEEEEGGAGRDSFEENPDFEGIPVLELVDSMANWVHHTQHILPQ</original>
    <variation>V</variation>
    <location>
        <begin position="287"/>
        <end position="542"/>
    </location>
</feature>
<feature type="sequence conflict" description="In Ref. 1; AAK19323." evidence="7" ref="1">
    <original>I</original>
    <variation>L</variation>
    <location>
        <position position="221"/>
    </location>
</feature>
<feature type="sequence conflict" description="In Ref. 1; AAK19323." evidence="7" ref="1">
    <original>E</original>
    <variation>K</variation>
    <location>
        <position position="575"/>
    </location>
</feature>